<reference key="1">
    <citation type="journal article" date="2008" name="Genome Res.">
        <title>Comparative genome analysis of Salmonella enteritidis PT4 and Salmonella gallinarum 287/91 provides insights into evolutionary and host adaptation pathways.</title>
        <authorList>
            <person name="Thomson N.R."/>
            <person name="Clayton D.J."/>
            <person name="Windhorst D."/>
            <person name="Vernikos G."/>
            <person name="Davidson S."/>
            <person name="Churcher C."/>
            <person name="Quail M.A."/>
            <person name="Stevens M."/>
            <person name="Jones M.A."/>
            <person name="Watson M."/>
            <person name="Barron A."/>
            <person name="Layton A."/>
            <person name="Pickard D."/>
            <person name="Kingsley R.A."/>
            <person name="Bignell A."/>
            <person name="Clark L."/>
            <person name="Harris B."/>
            <person name="Ormond D."/>
            <person name="Abdellah Z."/>
            <person name="Brooks K."/>
            <person name="Cherevach I."/>
            <person name="Chillingworth T."/>
            <person name="Woodward J."/>
            <person name="Norberczak H."/>
            <person name="Lord A."/>
            <person name="Arrowsmith C."/>
            <person name="Jagels K."/>
            <person name="Moule S."/>
            <person name="Mungall K."/>
            <person name="Saunders M."/>
            <person name="Whitehead S."/>
            <person name="Chabalgoity J.A."/>
            <person name="Maskell D."/>
            <person name="Humphreys T."/>
            <person name="Roberts M."/>
            <person name="Barrow P.A."/>
            <person name="Dougan G."/>
            <person name="Parkhill J."/>
        </authorList>
    </citation>
    <scope>NUCLEOTIDE SEQUENCE [LARGE SCALE GENOMIC DNA]</scope>
    <source>
        <strain>287/91 / NCTC 13346</strain>
    </source>
</reference>
<dbReference type="EC" id="1.1.1.86" evidence="1"/>
<dbReference type="EMBL" id="AM933173">
    <property type="protein sequence ID" value="CAR39322.1"/>
    <property type="molecule type" value="Genomic_DNA"/>
</dbReference>
<dbReference type="RefSeq" id="WP_000024943.1">
    <property type="nucleotide sequence ID" value="NC_011274.1"/>
</dbReference>
<dbReference type="SMR" id="B5RFS8"/>
<dbReference type="KEGG" id="seg:SG3533"/>
<dbReference type="HOGENOM" id="CLU_551905_0_0_6"/>
<dbReference type="UniPathway" id="UPA00047">
    <property type="reaction ID" value="UER00056"/>
</dbReference>
<dbReference type="UniPathway" id="UPA00049">
    <property type="reaction ID" value="UER00060"/>
</dbReference>
<dbReference type="Proteomes" id="UP000008321">
    <property type="component" value="Chromosome"/>
</dbReference>
<dbReference type="GO" id="GO:0005829">
    <property type="term" value="C:cytosol"/>
    <property type="evidence" value="ECO:0007669"/>
    <property type="project" value="TreeGrafter"/>
</dbReference>
<dbReference type="GO" id="GO:0004455">
    <property type="term" value="F:ketol-acid reductoisomerase activity"/>
    <property type="evidence" value="ECO:0007669"/>
    <property type="project" value="UniProtKB-UniRule"/>
</dbReference>
<dbReference type="GO" id="GO:0000287">
    <property type="term" value="F:magnesium ion binding"/>
    <property type="evidence" value="ECO:0007669"/>
    <property type="project" value="UniProtKB-UniRule"/>
</dbReference>
<dbReference type="GO" id="GO:0009097">
    <property type="term" value="P:isoleucine biosynthetic process"/>
    <property type="evidence" value="ECO:0007669"/>
    <property type="project" value="UniProtKB-UniRule"/>
</dbReference>
<dbReference type="GO" id="GO:0009099">
    <property type="term" value="P:L-valine biosynthetic process"/>
    <property type="evidence" value="ECO:0007669"/>
    <property type="project" value="UniProtKB-UniRule"/>
</dbReference>
<dbReference type="FunFam" id="1.10.1040.10:FF:000007">
    <property type="entry name" value="Ketol-acid reductoisomerase (NADP(+))"/>
    <property type="match status" value="1"/>
</dbReference>
<dbReference type="FunFam" id="3.40.50.720:FF:000043">
    <property type="entry name" value="Ketol-acid reductoisomerase (NADP(+))"/>
    <property type="match status" value="1"/>
</dbReference>
<dbReference type="Gene3D" id="1.10.1040.10">
    <property type="entry name" value="N-(1-d-carboxylethyl)-l-norvaline Dehydrogenase, domain 2"/>
    <property type="match status" value="1"/>
</dbReference>
<dbReference type="Gene3D" id="3.40.50.720">
    <property type="entry name" value="NAD(P)-binding Rossmann-like Domain"/>
    <property type="match status" value="1"/>
</dbReference>
<dbReference type="HAMAP" id="MF_00435">
    <property type="entry name" value="IlvC"/>
    <property type="match status" value="1"/>
</dbReference>
<dbReference type="InterPro" id="IPR008927">
    <property type="entry name" value="6-PGluconate_DH-like_C_sf"/>
</dbReference>
<dbReference type="InterPro" id="IPR013328">
    <property type="entry name" value="6PGD_dom2"/>
</dbReference>
<dbReference type="InterPro" id="IPR013023">
    <property type="entry name" value="KARI"/>
</dbReference>
<dbReference type="InterPro" id="IPR000506">
    <property type="entry name" value="KARI_C"/>
</dbReference>
<dbReference type="InterPro" id="IPR013116">
    <property type="entry name" value="KARI_N"/>
</dbReference>
<dbReference type="InterPro" id="IPR036291">
    <property type="entry name" value="NAD(P)-bd_dom_sf"/>
</dbReference>
<dbReference type="NCBIfam" id="TIGR00465">
    <property type="entry name" value="ilvC"/>
    <property type="match status" value="1"/>
</dbReference>
<dbReference type="NCBIfam" id="NF003557">
    <property type="entry name" value="PRK05225.1"/>
    <property type="match status" value="1"/>
</dbReference>
<dbReference type="PANTHER" id="PTHR21371">
    <property type="entry name" value="KETOL-ACID REDUCTOISOMERASE, MITOCHONDRIAL"/>
    <property type="match status" value="1"/>
</dbReference>
<dbReference type="PANTHER" id="PTHR21371:SF1">
    <property type="entry name" value="KETOL-ACID REDUCTOISOMERASE, MITOCHONDRIAL"/>
    <property type="match status" value="1"/>
</dbReference>
<dbReference type="Pfam" id="PF01450">
    <property type="entry name" value="KARI_C"/>
    <property type="match status" value="2"/>
</dbReference>
<dbReference type="Pfam" id="PF07991">
    <property type="entry name" value="KARI_N"/>
    <property type="match status" value="1"/>
</dbReference>
<dbReference type="SUPFAM" id="SSF48179">
    <property type="entry name" value="6-phosphogluconate dehydrogenase C-terminal domain-like"/>
    <property type="match status" value="2"/>
</dbReference>
<dbReference type="SUPFAM" id="SSF51735">
    <property type="entry name" value="NAD(P)-binding Rossmann-fold domains"/>
    <property type="match status" value="1"/>
</dbReference>
<dbReference type="PROSITE" id="PS51851">
    <property type="entry name" value="KARI_C"/>
    <property type="match status" value="2"/>
</dbReference>
<dbReference type="PROSITE" id="PS51850">
    <property type="entry name" value="KARI_N"/>
    <property type="match status" value="1"/>
</dbReference>
<name>ILVC_SALG2</name>
<comment type="function">
    <text evidence="1">Involved in the biosynthesis of branched-chain amino acids (BCAA). Catalyzes an alkyl-migration followed by a ketol-acid reduction of (S)-2-acetolactate (S2AL) to yield (R)-2,3-dihydroxy-isovalerate. In the isomerase reaction, S2AL is rearranged via a Mg-dependent methyl migration to produce 3-hydroxy-3-methyl-2-ketobutyrate (HMKB). In the reductase reaction, this 2-ketoacid undergoes a metal-dependent reduction by NADPH to yield (R)-2,3-dihydroxy-isovalerate.</text>
</comment>
<comment type="catalytic activity">
    <reaction evidence="1">
        <text>(2R)-2,3-dihydroxy-3-methylbutanoate + NADP(+) = (2S)-2-acetolactate + NADPH + H(+)</text>
        <dbReference type="Rhea" id="RHEA:22068"/>
        <dbReference type="ChEBI" id="CHEBI:15378"/>
        <dbReference type="ChEBI" id="CHEBI:49072"/>
        <dbReference type="ChEBI" id="CHEBI:57783"/>
        <dbReference type="ChEBI" id="CHEBI:58349"/>
        <dbReference type="ChEBI" id="CHEBI:58476"/>
        <dbReference type="EC" id="1.1.1.86"/>
    </reaction>
</comment>
<comment type="catalytic activity">
    <reaction evidence="1">
        <text>(2R,3R)-2,3-dihydroxy-3-methylpentanoate + NADP(+) = (S)-2-ethyl-2-hydroxy-3-oxobutanoate + NADPH + H(+)</text>
        <dbReference type="Rhea" id="RHEA:13493"/>
        <dbReference type="ChEBI" id="CHEBI:15378"/>
        <dbReference type="ChEBI" id="CHEBI:49256"/>
        <dbReference type="ChEBI" id="CHEBI:49258"/>
        <dbReference type="ChEBI" id="CHEBI:57783"/>
        <dbReference type="ChEBI" id="CHEBI:58349"/>
        <dbReference type="EC" id="1.1.1.86"/>
    </reaction>
</comment>
<comment type="cofactor">
    <cofactor evidence="1">
        <name>Mg(2+)</name>
        <dbReference type="ChEBI" id="CHEBI:18420"/>
    </cofactor>
    <text evidence="1">Binds 2 magnesium ions per subunit.</text>
</comment>
<comment type="pathway">
    <text evidence="1">Amino-acid biosynthesis; L-isoleucine biosynthesis; L-isoleucine from 2-oxobutanoate: step 2/4.</text>
</comment>
<comment type="pathway">
    <text evidence="1">Amino-acid biosynthesis; L-valine biosynthesis; L-valine from pyruvate: step 2/4.</text>
</comment>
<comment type="similarity">
    <text evidence="1">Belongs to the ketol-acid reductoisomerase family.</text>
</comment>
<gene>
    <name evidence="1" type="primary">ilvC</name>
    <name type="ordered locus">SG3533</name>
</gene>
<sequence>MANYFNTLNLRQQLAQLGKCRFMGRDEFADGASYLQGKKVVIVGCGAQGLNQGLNMRDSGLDISYALRKEAIAEKRASWRKATENGFKVGTYEELIPQADLVVNLTPDKQHSDVVRSVQPLMKDGAALGYSHGFNIVEVGEQIRKDITVVMVAPKCPGTEVREEYKRGFGVPTLIAVHPENDPKGEGMAIAKAWAAATGGHRAGVLESSFVAEVKSDLMGEQTILCGMLQAGSLLCFDKLVAEGTDPAYAEKLIQFGWETITEALKQGGITLMMDRLSNPAKLRAYALSEQLKEIMAPLFQKHMDDIISGEFSSGMMADWANDDKKLLTWREETGKTAFETAPQFEGKIGEQEYFDKGVLMIAMVKAGVELAFETMVDSGIIEESAYYESLHELPLIANTIARKRLYEMNVVISDTAEYGNYLFSYACVPLLKPFMAELQPGDLGSAIPEGAVDNAQLRDVNDAIRSHAIEQVGKKLRGYMTDMKRIAVAG</sequence>
<protein>
    <recommendedName>
        <fullName evidence="1">Ketol-acid reductoisomerase (NADP(+))</fullName>
        <shortName evidence="1">KARI</shortName>
        <ecNumber evidence="1">1.1.1.86</ecNumber>
    </recommendedName>
    <alternativeName>
        <fullName evidence="1">Acetohydroxy-acid isomeroreductase</fullName>
        <shortName evidence="1">AHIR</shortName>
    </alternativeName>
    <alternativeName>
        <fullName evidence="1">Alpha-keto-beta-hydroxylacyl reductoisomerase</fullName>
    </alternativeName>
    <alternativeName>
        <fullName evidence="1">Ketol-acid reductoisomerase type 2</fullName>
    </alternativeName>
    <alternativeName>
        <fullName evidence="1">Ketol-acid reductoisomerase type II</fullName>
    </alternativeName>
</protein>
<organism>
    <name type="scientific">Salmonella gallinarum (strain 287/91 / NCTC 13346)</name>
    <dbReference type="NCBI Taxonomy" id="550538"/>
    <lineage>
        <taxon>Bacteria</taxon>
        <taxon>Pseudomonadati</taxon>
        <taxon>Pseudomonadota</taxon>
        <taxon>Gammaproteobacteria</taxon>
        <taxon>Enterobacterales</taxon>
        <taxon>Enterobacteriaceae</taxon>
        <taxon>Salmonella</taxon>
    </lineage>
</organism>
<proteinExistence type="inferred from homology"/>
<feature type="chain" id="PRO_1000190987" description="Ketol-acid reductoisomerase (NADP(+))">
    <location>
        <begin position="1"/>
        <end position="491"/>
    </location>
</feature>
<feature type="domain" description="KARI N-terminal Rossmann" evidence="2">
    <location>
        <begin position="15"/>
        <end position="208"/>
    </location>
</feature>
<feature type="domain" description="KARI C-terminal knotted 1" evidence="3">
    <location>
        <begin position="209"/>
        <end position="344"/>
    </location>
</feature>
<feature type="domain" description="KARI C-terminal knotted 2" evidence="3">
    <location>
        <begin position="345"/>
        <end position="484"/>
    </location>
</feature>
<feature type="active site" evidence="1">
    <location>
        <position position="132"/>
    </location>
</feature>
<feature type="binding site" evidence="1">
    <location>
        <begin position="45"/>
        <end position="48"/>
    </location>
    <ligand>
        <name>NADP(+)</name>
        <dbReference type="ChEBI" id="CHEBI:58349"/>
    </ligand>
</feature>
<feature type="binding site" evidence="1">
    <location>
        <position position="68"/>
    </location>
    <ligand>
        <name>NADP(+)</name>
        <dbReference type="ChEBI" id="CHEBI:58349"/>
    </ligand>
</feature>
<feature type="binding site" evidence="1">
    <location>
        <position position="76"/>
    </location>
    <ligand>
        <name>NADP(+)</name>
        <dbReference type="ChEBI" id="CHEBI:58349"/>
    </ligand>
</feature>
<feature type="binding site" evidence="1">
    <location>
        <position position="78"/>
    </location>
    <ligand>
        <name>NADP(+)</name>
        <dbReference type="ChEBI" id="CHEBI:58349"/>
    </ligand>
</feature>
<feature type="binding site" evidence="1">
    <location>
        <begin position="108"/>
        <end position="110"/>
    </location>
    <ligand>
        <name>NADP(+)</name>
        <dbReference type="ChEBI" id="CHEBI:58349"/>
    </ligand>
</feature>
<feature type="binding site" evidence="1">
    <location>
        <position position="158"/>
    </location>
    <ligand>
        <name>NADP(+)</name>
        <dbReference type="ChEBI" id="CHEBI:58349"/>
    </ligand>
</feature>
<feature type="binding site" evidence="1">
    <location>
        <position position="217"/>
    </location>
    <ligand>
        <name>Mg(2+)</name>
        <dbReference type="ChEBI" id="CHEBI:18420"/>
        <label>1</label>
    </ligand>
</feature>
<feature type="binding site" evidence="1">
    <location>
        <position position="217"/>
    </location>
    <ligand>
        <name>Mg(2+)</name>
        <dbReference type="ChEBI" id="CHEBI:18420"/>
        <label>2</label>
    </ligand>
</feature>
<feature type="binding site" evidence="1">
    <location>
        <position position="221"/>
    </location>
    <ligand>
        <name>Mg(2+)</name>
        <dbReference type="ChEBI" id="CHEBI:18420"/>
        <label>1</label>
    </ligand>
</feature>
<feature type="binding site" evidence="1">
    <location>
        <position position="389"/>
    </location>
    <ligand>
        <name>Mg(2+)</name>
        <dbReference type="ChEBI" id="CHEBI:18420"/>
        <label>2</label>
    </ligand>
</feature>
<feature type="binding site" evidence="1">
    <location>
        <position position="393"/>
    </location>
    <ligand>
        <name>Mg(2+)</name>
        <dbReference type="ChEBI" id="CHEBI:18420"/>
        <label>2</label>
    </ligand>
</feature>
<feature type="binding site" evidence="1">
    <location>
        <position position="414"/>
    </location>
    <ligand>
        <name>substrate</name>
    </ligand>
</feature>
<evidence type="ECO:0000255" key="1">
    <source>
        <dbReference type="HAMAP-Rule" id="MF_00435"/>
    </source>
</evidence>
<evidence type="ECO:0000255" key="2">
    <source>
        <dbReference type="PROSITE-ProRule" id="PRU01197"/>
    </source>
</evidence>
<evidence type="ECO:0000255" key="3">
    <source>
        <dbReference type="PROSITE-ProRule" id="PRU01198"/>
    </source>
</evidence>
<accession>B5RFS8</accession>
<keyword id="KW-0028">Amino-acid biosynthesis</keyword>
<keyword id="KW-0100">Branched-chain amino acid biosynthesis</keyword>
<keyword id="KW-0460">Magnesium</keyword>
<keyword id="KW-0479">Metal-binding</keyword>
<keyword id="KW-0521">NADP</keyword>
<keyword id="KW-0560">Oxidoreductase</keyword>
<keyword id="KW-0677">Repeat</keyword>